<sequence>MKKAILMMTFGSPEEITFEGVADFFTNIRRGVRPQDHEIQTLYDNYVRIGGTPLQKITRQEVTLVEARLGNEYSVYFANKFSSPFIPDVIGQMEADGIEQCICLILEPHYSFYSVMGYEKFLESKQIQFLVIKDWYQEEALLNYWADEIAKILKEEVKQDSFKVIFSAHSVPIFALDFGDPYIDQIFENSKLVAEKLGLSSEQYTNTWQSESDIGIPWIKPDVLEYLREQTEHPDHYIFVPISFISEHIEVLFDNDVECYDLCQEFGVNYHRPPMPNTDSRLIDALVNTVRVNENQEFKEFLPEEETFDELVPSDETKNILAESEDLQMPEFVKKLIEKKGRENVKMPYLIKKMLEKAGKLPKE</sequence>
<name>CPFC_STRR6</name>
<evidence type="ECO:0000255" key="1">
    <source>
        <dbReference type="HAMAP-Rule" id="MF_00323"/>
    </source>
</evidence>
<protein>
    <recommendedName>
        <fullName evidence="1">Coproporphyrin III ferrochelatase</fullName>
        <ecNumber evidence="1">4.99.1.9</ecNumber>
    </recommendedName>
</protein>
<gene>
    <name evidence="1" type="primary">cpfC</name>
    <name type="ordered locus">spr0914</name>
</gene>
<reference key="1">
    <citation type="journal article" date="2001" name="J. Bacteriol.">
        <title>Genome of the bacterium Streptococcus pneumoniae strain R6.</title>
        <authorList>
            <person name="Hoskins J."/>
            <person name="Alborn W.E. Jr."/>
            <person name="Arnold J."/>
            <person name="Blaszczak L.C."/>
            <person name="Burgett S."/>
            <person name="DeHoff B.S."/>
            <person name="Estrem S.T."/>
            <person name="Fritz L."/>
            <person name="Fu D.-J."/>
            <person name="Fuller W."/>
            <person name="Geringer C."/>
            <person name="Gilmour R."/>
            <person name="Glass J.S."/>
            <person name="Khoja H."/>
            <person name="Kraft A.R."/>
            <person name="Lagace R.E."/>
            <person name="LeBlanc D.J."/>
            <person name="Lee L.N."/>
            <person name="Lefkowitz E.J."/>
            <person name="Lu J."/>
            <person name="Matsushima P."/>
            <person name="McAhren S.M."/>
            <person name="McHenney M."/>
            <person name="McLeaster K."/>
            <person name="Mundy C.W."/>
            <person name="Nicas T.I."/>
            <person name="Norris F.H."/>
            <person name="O'Gara M."/>
            <person name="Peery R.B."/>
            <person name="Robertson G.T."/>
            <person name="Rockey P."/>
            <person name="Sun P.-M."/>
            <person name="Winkler M.E."/>
            <person name="Yang Y."/>
            <person name="Young-Bellido M."/>
            <person name="Zhao G."/>
            <person name="Zook C.A."/>
            <person name="Baltz R.H."/>
            <person name="Jaskunas S.R."/>
            <person name="Rosteck P.R. Jr."/>
            <person name="Skatrud P.L."/>
            <person name="Glass J.I."/>
        </authorList>
    </citation>
    <scope>NUCLEOTIDE SEQUENCE [LARGE SCALE GENOMIC DNA]</scope>
    <source>
        <strain>ATCC BAA-255 / R6</strain>
    </source>
</reference>
<comment type="function">
    <text evidence="1">Involved in coproporphyrin-dependent heme b biosynthesis. Catalyzes the insertion of ferrous iron into coproporphyrin III to form Fe-coproporphyrin III.</text>
</comment>
<comment type="catalytic activity">
    <reaction evidence="1">
        <text>Fe-coproporphyrin III + 2 H(+) = coproporphyrin III + Fe(2+)</text>
        <dbReference type="Rhea" id="RHEA:49572"/>
        <dbReference type="ChEBI" id="CHEBI:15378"/>
        <dbReference type="ChEBI" id="CHEBI:29033"/>
        <dbReference type="ChEBI" id="CHEBI:68438"/>
        <dbReference type="ChEBI" id="CHEBI:131725"/>
        <dbReference type="EC" id="4.99.1.9"/>
    </reaction>
    <physiologicalReaction direction="right-to-left" evidence="1">
        <dbReference type="Rhea" id="RHEA:49574"/>
    </physiologicalReaction>
</comment>
<comment type="pathway">
    <text evidence="1">Porphyrin-containing compound metabolism; protoheme biosynthesis.</text>
</comment>
<comment type="subcellular location">
    <subcellularLocation>
        <location evidence="1">Cytoplasm</location>
    </subcellularLocation>
</comment>
<comment type="similarity">
    <text evidence="1">Belongs to the ferrochelatase family.</text>
</comment>
<feature type="chain" id="PRO_0000175213" description="Coproporphyrin III ferrochelatase">
    <location>
        <begin position="1"/>
        <end position="364"/>
    </location>
</feature>
<feature type="binding site" evidence="1">
    <location>
        <position position="29"/>
    </location>
    <ligand>
        <name>Fe-coproporphyrin III</name>
        <dbReference type="ChEBI" id="CHEBI:68438"/>
    </ligand>
</feature>
<feature type="binding site" evidence="1">
    <location>
        <position position="118"/>
    </location>
    <ligand>
        <name>Fe-coproporphyrin III</name>
        <dbReference type="ChEBI" id="CHEBI:68438"/>
    </ligand>
</feature>
<feature type="binding site" evidence="1">
    <location>
        <position position="169"/>
    </location>
    <ligand>
        <name>Fe(2+)</name>
        <dbReference type="ChEBI" id="CHEBI:29033"/>
    </ligand>
</feature>
<feature type="binding site" evidence="1">
    <location>
        <position position="250"/>
    </location>
    <ligand>
        <name>Fe(2+)</name>
        <dbReference type="ChEBI" id="CHEBI:29033"/>
    </ligand>
</feature>
<accession>Q8DQ04</accession>
<organism>
    <name type="scientific">Streptococcus pneumoniae (strain ATCC BAA-255 / R6)</name>
    <dbReference type="NCBI Taxonomy" id="171101"/>
    <lineage>
        <taxon>Bacteria</taxon>
        <taxon>Bacillati</taxon>
        <taxon>Bacillota</taxon>
        <taxon>Bacilli</taxon>
        <taxon>Lactobacillales</taxon>
        <taxon>Streptococcaceae</taxon>
        <taxon>Streptococcus</taxon>
    </lineage>
</organism>
<proteinExistence type="inferred from homology"/>
<keyword id="KW-0963">Cytoplasm</keyword>
<keyword id="KW-0350">Heme biosynthesis</keyword>
<keyword id="KW-0408">Iron</keyword>
<keyword id="KW-0456">Lyase</keyword>
<keyword id="KW-0479">Metal-binding</keyword>
<keyword id="KW-0627">Porphyrin biosynthesis</keyword>
<keyword id="KW-1185">Reference proteome</keyword>
<dbReference type="EC" id="4.99.1.9" evidence="1"/>
<dbReference type="EMBL" id="AE007317">
    <property type="protein sequence ID" value="AAK99718.1"/>
    <property type="molecule type" value="Genomic_DNA"/>
</dbReference>
<dbReference type="PIR" id="B97986">
    <property type="entry name" value="B97986"/>
</dbReference>
<dbReference type="RefSeq" id="NP_358508.1">
    <property type="nucleotide sequence ID" value="NC_003098.1"/>
</dbReference>
<dbReference type="RefSeq" id="WP_000709260.1">
    <property type="nucleotide sequence ID" value="NC_003098.1"/>
</dbReference>
<dbReference type="SMR" id="Q8DQ04"/>
<dbReference type="STRING" id="171101.spr0914"/>
<dbReference type="KEGG" id="spr:spr0914"/>
<dbReference type="PATRIC" id="fig|171101.6.peg.1001"/>
<dbReference type="eggNOG" id="COG0276">
    <property type="taxonomic scope" value="Bacteria"/>
</dbReference>
<dbReference type="HOGENOM" id="CLU_018884_2_1_9"/>
<dbReference type="UniPathway" id="UPA00252"/>
<dbReference type="Proteomes" id="UP000000586">
    <property type="component" value="Chromosome"/>
</dbReference>
<dbReference type="GO" id="GO:0005737">
    <property type="term" value="C:cytoplasm"/>
    <property type="evidence" value="ECO:0007669"/>
    <property type="project" value="UniProtKB-SubCell"/>
</dbReference>
<dbReference type="GO" id="GO:0004325">
    <property type="term" value="F:ferrochelatase activity"/>
    <property type="evidence" value="ECO:0000318"/>
    <property type="project" value="GO_Central"/>
</dbReference>
<dbReference type="GO" id="GO:0046872">
    <property type="term" value="F:metal ion binding"/>
    <property type="evidence" value="ECO:0007669"/>
    <property type="project" value="UniProtKB-KW"/>
</dbReference>
<dbReference type="GO" id="GO:0006783">
    <property type="term" value="P:heme biosynthetic process"/>
    <property type="evidence" value="ECO:0000318"/>
    <property type="project" value="GO_Central"/>
</dbReference>
<dbReference type="CDD" id="cd00419">
    <property type="entry name" value="Ferrochelatase_C"/>
    <property type="match status" value="1"/>
</dbReference>
<dbReference type="FunFam" id="3.40.50.1400:FF:000007">
    <property type="entry name" value="Ferrochelatase"/>
    <property type="match status" value="1"/>
</dbReference>
<dbReference type="Gene3D" id="3.40.50.1400">
    <property type="match status" value="2"/>
</dbReference>
<dbReference type="HAMAP" id="MF_00323">
    <property type="entry name" value="Ferrochelatase"/>
    <property type="match status" value="1"/>
</dbReference>
<dbReference type="InterPro" id="IPR001015">
    <property type="entry name" value="Ferrochelatase"/>
</dbReference>
<dbReference type="InterPro" id="IPR019772">
    <property type="entry name" value="Ferrochelatase_AS"/>
</dbReference>
<dbReference type="InterPro" id="IPR033644">
    <property type="entry name" value="Ferrochelatase_C"/>
</dbReference>
<dbReference type="NCBIfam" id="TIGR00109">
    <property type="entry name" value="hemH"/>
    <property type="match status" value="1"/>
</dbReference>
<dbReference type="PANTHER" id="PTHR11108">
    <property type="entry name" value="FERROCHELATASE"/>
    <property type="match status" value="1"/>
</dbReference>
<dbReference type="PANTHER" id="PTHR11108:SF1">
    <property type="entry name" value="FERROCHELATASE, MITOCHONDRIAL"/>
    <property type="match status" value="1"/>
</dbReference>
<dbReference type="Pfam" id="PF00762">
    <property type="entry name" value="Ferrochelatase"/>
    <property type="match status" value="1"/>
</dbReference>
<dbReference type="SUPFAM" id="SSF53800">
    <property type="entry name" value="Chelatase"/>
    <property type="match status" value="1"/>
</dbReference>
<dbReference type="PROSITE" id="PS00534">
    <property type="entry name" value="FERROCHELATASE"/>
    <property type="match status" value="1"/>
</dbReference>